<reference key="1">
    <citation type="journal article" date="2007" name="Genome Res.">
        <title>Genome characteristics of facultatively symbiotic Frankia sp. strains reflect host range and host plant biogeography.</title>
        <authorList>
            <person name="Normand P."/>
            <person name="Lapierre P."/>
            <person name="Tisa L.S."/>
            <person name="Gogarten J.P."/>
            <person name="Alloisio N."/>
            <person name="Bagnarol E."/>
            <person name="Bassi C.A."/>
            <person name="Berry A.M."/>
            <person name="Bickhart D.M."/>
            <person name="Choisne N."/>
            <person name="Couloux A."/>
            <person name="Cournoyer B."/>
            <person name="Cruveiller S."/>
            <person name="Daubin V."/>
            <person name="Demange N."/>
            <person name="Francino M.P."/>
            <person name="Goltsman E."/>
            <person name="Huang Y."/>
            <person name="Kopp O.R."/>
            <person name="Labarre L."/>
            <person name="Lapidus A."/>
            <person name="Lavire C."/>
            <person name="Marechal J."/>
            <person name="Martinez M."/>
            <person name="Mastronunzio J.E."/>
            <person name="Mullin B.C."/>
            <person name="Niemann J."/>
            <person name="Pujic P."/>
            <person name="Rawnsley T."/>
            <person name="Rouy Z."/>
            <person name="Schenowitz C."/>
            <person name="Sellstedt A."/>
            <person name="Tavares F."/>
            <person name="Tomkins J.P."/>
            <person name="Vallenet D."/>
            <person name="Valverde C."/>
            <person name="Wall L.G."/>
            <person name="Wang Y."/>
            <person name="Medigue C."/>
            <person name="Benson D.R."/>
        </authorList>
    </citation>
    <scope>NUCLEOTIDE SEQUENCE [LARGE SCALE GENOMIC DNA]</scope>
    <source>
        <strain>DSM 45818 / CECT 9043 / HFP020203 / CcI3</strain>
    </source>
</reference>
<gene>
    <name evidence="1" type="primary">cobQ</name>
    <name type="ordered locus">Francci3_2603</name>
</gene>
<organism>
    <name type="scientific">Frankia casuarinae (strain DSM 45818 / CECT 9043 / HFP020203 / CcI3)</name>
    <dbReference type="NCBI Taxonomy" id="106370"/>
    <lineage>
        <taxon>Bacteria</taxon>
        <taxon>Bacillati</taxon>
        <taxon>Actinomycetota</taxon>
        <taxon>Actinomycetes</taxon>
        <taxon>Frankiales</taxon>
        <taxon>Frankiaceae</taxon>
        <taxon>Frankia</taxon>
    </lineage>
</organism>
<comment type="function">
    <text evidence="1">Catalyzes amidations at positions B, D, E, and G on adenosylcobyrinic A,C-diamide. NH(2) groups are provided by glutamine, and one molecule of ATP is hydrogenolyzed for each amidation.</text>
</comment>
<comment type="pathway">
    <text evidence="1">Cofactor biosynthesis; adenosylcobalamin biosynthesis.</text>
</comment>
<comment type="similarity">
    <text evidence="1">Belongs to the CobB/CobQ family. CobQ subfamily.</text>
</comment>
<feature type="chain" id="PRO_1000002357" description="Cobyric acid synthase">
    <location>
        <begin position="1"/>
        <end position="520"/>
    </location>
</feature>
<feature type="domain" description="GATase cobBQ-type" evidence="1">
    <location>
        <begin position="275"/>
        <end position="453"/>
    </location>
</feature>
<feature type="active site" description="Nucleophile" evidence="1">
    <location>
        <position position="356"/>
    </location>
</feature>
<feature type="active site" evidence="1">
    <location>
        <position position="445"/>
    </location>
</feature>
<keyword id="KW-0169">Cobalamin biosynthesis</keyword>
<keyword id="KW-0315">Glutamine amidotransferase</keyword>
<keyword id="KW-1185">Reference proteome</keyword>
<proteinExistence type="inferred from homology"/>
<dbReference type="EMBL" id="CP000249">
    <property type="protein sequence ID" value="ABD11965.1"/>
    <property type="molecule type" value="Genomic_DNA"/>
</dbReference>
<dbReference type="RefSeq" id="WP_011437000.1">
    <property type="nucleotide sequence ID" value="NC_007777.1"/>
</dbReference>
<dbReference type="SMR" id="Q2J9S7"/>
<dbReference type="STRING" id="106370.Francci3_2603"/>
<dbReference type="KEGG" id="fra:Francci3_2603"/>
<dbReference type="eggNOG" id="COG1492">
    <property type="taxonomic scope" value="Bacteria"/>
</dbReference>
<dbReference type="HOGENOM" id="CLU_019250_2_2_11"/>
<dbReference type="OrthoDB" id="9808302at2"/>
<dbReference type="PhylomeDB" id="Q2J9S7"/>
<dbReference type="UniPathway" id="UPA00148"/>
<dbReference type="Proteomes" id="UP000001937">
    <property type="component" value="Chromosome"/>
</dbReference>
<dbReference type="GO" id="GO:0015420">
    <property type="term" value="F:ABC-type vitamin B12 transporter activity"/>
    <property type="evidence" value="ECO:0007669"/>
    <property type="project" value="UniProtKB-UniRule"/>
</dbReference>
<dbReference type="GO" id="GO:0003824">
    <property type="term" value="F:catalytic activity"/>
    <property type="evidence" value="ECO:0007669"/>
    <property type="project" value="InterPro"/>
</dbReference>
<dbReference type="GO" id="GO:0009236">
    <property type="term" value="P:cobalamin biosynthetic process"/>
    <property type="evidence" value="ECO:0007669"/>
    <property type="project" value="UniProtKB-UniRule"/>
</dbReference>
<dbReference type="CDD" id="cd05389">
    <property type="entry name" value="CobQ_N"/>
    <property type="match status" value="1"/>
</dbReference>
<dbReference type="CDD" id="cd01750">
    <property type="entry name" value="GATase1_CobQ"/>
    <property type="match status" value="1"/>
</dbReference>
<dbReference type="Gene3D" id="3.40.50.880">
    <property type="match status" value="1"/>
</dbReference>
<dbReference type="Gene3D" id="3.40.50.300">
    <property type="entry name" value="P-loop containing nucleotide triphosphate hydrolases"/>
    <property type="match status" value="1"/>
</dbReference>
<dbReference type="HAMAP" id="MF_00028">
    <property type="entry name" value="CobQ"/>
    <property type="match status" value="1"/>
</dbReference>
<dbReference type="InterPro" id="IPR029062">
    <property type="entry name" value="Class_I_gatase-like"/>
</dbReference>
<dbReference type="InterPro" id="IPR002586">
    <property type="entry name" value="CobQ/CobB/MinD/ParA_Nub-bd_dom"/>
</dbReference>
<dbReference type="InterPro" id="IPR033949">
    <property type="entry name" value="CobQ_GATase1"/>
</dbReference>
<dbReference type="InterPro" id="IPR047045">
    <property type="entry name" value="CobQ_N"/>
</dbReference>
<dbReference type="InterPro" id="IPR004459">
    <property type="entry name" value="CobQ_synth"/>
</dbReference>
<dbReference type="InterPro" id="IPR011698">
    <property type="entry name" value="GATase_3"/>
</dbReference>
<dbReference type="InterPro" id="IPR027417">
    <property type="entry name" value="P-loop_NTPase"/>
</dbReference>
<dbReference type="NCBIfam" id="NF001989">
    <property type="entry name" value="PRK00784.1"/>
    <property type="match status" value="1"/>
</dbReference>
<dbReference type="PANTHER" id="PTHR21343:SF1">
    <property type="entry name" value="COBYRIC ACID SYNTHASE"/>
    <property type="match status" value="1"/>
</dbReference>
<dbReference type="PANTHER" id="PTHR21343">
    <property type="entry name" value="DETHIOBIOTIN SYNTHETASE"/>
    <property type="match status" value="1"/>
</dbReference>
<dbReference type="Pfam" id="PF01656">
    <property type="entry name" value="CbiA"/>
    <property type="match status" value="1"/>
</dbReference>
<dbReference type="Pfam" id="PF07685">
    <property type="entry name" value="GATase_3"/>
    <property type="match status" value="1"/>
</dbReference>
<dbReference type="SUPFAM" id="SSF52317">
    <property type="entry name" value="Class I glutamine amidotransferase-like"/>
    <property type="match status" value="1"/>
</dbReference>
<dbReference type="SUPFAM" id="SSF52540">
    <property type="entry name" value="P-loop containing nucleoside triphosphate hydrolases"/>
    <property type="match status" value="1"/>
</dbReference>
<dbReference type="PROSITE" id="PS51274">
    <property type="entry name" value="GATASE_COBBQ"/>
    <property type="match status" value="1"/>
</dbReference>
<name>COBQ_FRACC</name>
<sequence length="520" mass="54677">MSGGLLVAGTASDAGKSVLTAGICRWLAREGVRVAPFKAQNMALNSAVTADGAEIGRAQAMQAAAAGVEPEAAMNPVLLKPGGQRHSQLVVLGRPVAEVDALGYRPYKERLAAIVLECLDDLRGRFDAVICEGAGSPAEINLRSTDIANMGLARAANLPVIVVGDIDKGGVFAALFGTLALLDAADQALVAGWVINRFRGDARLLEPGLRQIERLTGRPVHGVVPWKAGLWLDVEDSLDLAAFPDAEPCPDAEPCPDAEPCPEARPASHGGRREVLRVAVIRLPRLSNVTDIDALRVEPGVAVRLATRPDELADADLVILPGTRSTVEDLRWLRRRGLAAALAERAAAARPVLGICGGYQILGRRIRDDVESGAGEVDGLGLLPVITTFDPVKLLGRRAATDAAGRPLTGYEIRHGRLTVEEHPDSAPFAADGVRVGAVAGTSWHGVLENDAFRRAYLADVATAAGRSFVPAFTCFADARQRRLDALGDLVADHLDTGALRRLLAEGTPAGLPFVPPGAS</sequence>
<protein>
    <recommendedName>
        <fullName evidence="1">Cobyric acid synthase</fullName>
    </recommendedName>
</protein>
<accession>Q2J9S7</accession>
<evidence type="ECO:0000255" key="1">
    <source>
        <dbReference type="HAMAP-Rule" id="MF_00028"/>
    </source>
</evidence>